<evidence type="ECO:0000250" key="1">
    <source>
        <dbReference type="UniProtKB" id="K4L7X3"/>
    </source>
</evidence>
<evidence type="ECO:0000269" key="2">
    <source>
    </source>
</evidence>
<evidence type="ECO:0000303" key="3">
    <source>
    </source>
</evidence>
<evidence type="ECO:0000305" key="4"/>
<evidence type="ECO:0000312" key="5">
    <source>
        <dbReference type="EMBL" id="KLN58429.1"/>
    </source>
</evidence>
<name>SPCAD_VARPD</name>
<gene>
    <name evidence="3" type="primary">acd</name>
    <name evidence="5" type="synonym">acdA</name>
    <name evidence="5" type="ORF">VPARA_05440</name>
</gene>
<accession>B9U6P5</accession>
<comment type="function">
    <text evidence="2">Catalyzes the conversion 3-sulfinopropanoyl-CoA (3SP-CoA) to propanoyl-CoA by abstraction of sulfite. Does not show dehydrogenase activity.</text>
</comment>
<comment type="catalytic activity">
    <reaction evidence="2">
        <text>3-sulfinopropanoyl-CoA + H2O = propanoyl-CoA + sulfite + H(+)</text>
        <dbReference type="Rhea" id="RHEA:41624"/>
        <dbReference type="ChEBI" id="CHEBI:15377"/>
        <dbReference type="ChEBI" id="CHEBI:15378"/>
        <dbReference type="ChEBI" id="CHEBI:17359"/>
        <dbReference type="ChEBI" id="CHEBI:57392"/>
        <dbReference type="ChEBI" id="CHEBI:78349"/>
        <dbReference type="EC" id="3.13.1.4"/>
    </reaction>
    <physiologicalReaction direction="left-to-right" evidence="2">
        <dbReference type="Rhea" id="RHEA:41625"/>
    </physiologicalReaction>
</comment>
<comment type="cofactor">
    <cofactor evidence="2">
        <name>FAD</name>
        <dbReference type="ChEBI" id="CHEBI:57692"/>
    </cofactor>
    <text evidence="1">Binds 1 FAD per subunit.</text>
</comment>
<comment type="biophysicochemical properties">
    <kinetics>
        <KM evidence="2">0.052 mM for 3SP-CoA</KM>
        <Vmax evidence="2">3.47 umol/min/mg enzyme</Vmax>
        <text evidence="2">kcat is 2.5 sec(-1).</text>
    </kinetics>
</comment>
<comment type="subunit">
    <text evidence="2">Homotrimer or homotetramer.</text>
</comment>
<comment type="similarity">
    <text evidence="4">Belongs to the acyl-CoA dehydrogenase family.</text>
</comment>
<protein>
    <recommendedName>
        <fullName evidence="4">3-sulfinopropanoyl-CoA desulfinase</fullName>
        <ecNumber evidence="2">3.13.1.4</ecNumber>
    </recommendedName>
    <alternativeName>
        <fullName evidence="3">3-sulfinopropionyl coenzyme A desulfinase</fullName>
        <shortName evidence="4">3-sulfinopropionyl-CoA desulfinase</shortName>
        <shortName evidence="3">3SP-CoA desulfinase</shortName>
    </alternativeName>
</protein>
<reference key="1">
    <citation type="journal article" date="2009" name="J. Biol. Chem.">
        <title>3-mercaptopropionate dioxygenase, a cysteine dioxygenase homologue, catalyzes the initial step of 3-mercaptopropionate catabolism in the 3,3-thiodipropionic acid-degrading bacterium variovorax paradoxus.</title>
        <authorList>
            <person name="Bruland N."/>
            <person name="Wubbeler J.H."/>
            <person name="Steinbuchel A."/>
        </authorList>
    </citation>
    <scope>NUCLEOTIDE SEQUENCE [GENOMIC DNA]</scope>
</reference>
<reference key="2">
    <citation type="submission" date="2015-03" db="EMBL/GenBank/DDBJ databases">
        <title>Genome sequence of Variovorax paradoxus TBEA6.</title>
        <authorList>
            <person name="Poehlein A."/>
            <person name="Schuldes J."/>
            <person name="Wuebbeler J.H."/>
            <person name="Hiessl S."/>
            <person name="Steinbuechel A."/>
            <person name="Daniel R."/>
        </authorList>
    </citation>
    <scope>NUCLEOTIDE SEQUENCE [LARGE SCALE GENOMIC DNA]</scope>
    <source>
        <strain>TBEA6</strain>
    </source>
</reference>
<reference key="3">
    <citation type="journal article" date="2014" name="J. Bacteriol.">
        <title>Identification of 3-sulfinopropionyl coenzyme A (CoA) desulfinases within the Acyl-CoA dehydrogenase superfamily.</title>
        <authorList>
            <person name="Schuermann M."/>
            <person name="Demming R.M."/>
            <person name="Krewing M."/>
            <person name="Rose J."/>
            <person name="Wuebbeler J.H."/>
            <person name="Steinbuechel A."/>
        </authorList>
    </citation>
    <scope>FUNCTION</scope>
    <scope>CATALYTIC ACTIVITY</scope>
    <scope>COFACTOR</scope>
    <scope>BIOPHYSICOCHEMICAL PROPERTIES</scope>
    <scope>SUBUNIT</scope>
    <source>
        <strain>TBEA6</strain>
    </source>
</reference>
<feature type="chain" id="PRO_0000452010" description="3-sulfinopropanoyl-CoA desulfinase">
    <location>
        <begin position="1"/>
        <end position="399"/>
    </location>
</feature>
<feature type="binding site" evidence="1">
    <location>
        <begin position="121"/>
        <end position="124"/>
    </location>
    <ligand>
        <name>FAD</name>
        <dbReference type="ChEBI" id="CHEBI:57692"/>
    </ligand>
</feature>
<feature type="binding site" evidence="1">
    <location>
        <position position="130"/>
    </location>
    <ligand>
        <name>FAD</name>
        <dbReference type="ChEBI" id="CHEBI:57692"/>
    </ligand>
</feature>
<feature type="binding site" evidence="1">
    <location>
        <begin position="153"/>
        <end position="156"/>
    </location>
    <ligand>
        <name>FAD</name>
        <dbReference type="ChEBI" id="CHEBI:57692"/>
    </ligand>
</feature>
<feature type="binding site" evidence="1">
    <location>
        <begin position="244"/>
        <end position="245"/>
    </location>
    <ligand>
        <name>substrate</name>
    </ligand>
</feature>
<feature type="binding site" evidence="1">
    <location>
        <position position="273"/>
    </location>
    <ligand>
        <name>FAD</name>
        <dbReference type="ChEBI" id="CHEBI:57692"/>
    </ligand>
</feature>
<feature type="binding site" evidence="1">
    <location>
        <position position="340"/>
    </location>
    <ligand>
        <name>FAD</name>
        <dbReference type="ChEBI" id="CHEBI:57692"/>
    </ligand>
</feature>
<feature type="binding site" evidence="1">
    <location>
        <position position="344"/>
    </location>
    <ligand>
        <name>FAD</name>
        <dbReference type="ChEBI" id="CHEBI:57692"/>
    </ligand>
</feature>
<feature type="binding site" evidence="1">
    <location>
        <begin position="367"/>
        <end position="371"/>
    </location>
    <ligand>
        <name>FAD</name>
        <dbReference type="ChEBI" id="CHEBI:57692"/>
    </ligand>
</feature>
<feature type="binding site" evidence="1">
    <location>
        <position position="388"/>
    </location>
    <ligand>
        <name>FAD</name>
        <dbReference type="ChEBI" id="CHEBI:57692"/>
    </ligand>
</feature>
<feature type="site" description="Important for activity" evidence="1">
    <location>
        <position position="84"/>
    </location>
</feature>
<keyword id="KW-0274">FAD</keyword>
<keyword id="KW-0285">Flavoprotein</keyword>
<keyword id="KW-0378">Hydrolase</keyword>
<keyword id="KW-1185">Reference proteome</keyword>
<sequence>MYDLTSAQLDLQARARELAQTKFAPTAAQTDQTEEYPWKNVELLRDAGFMGMTLPKSIGGQGLSYLDAVIVVEEMAKACATMGRITVEANMGAIGAIAKYGTPEQLKIAADLVLAGDKPAICISEPNAGSAASEMTTRADRQGDHYIINGEKYWITGGGVSKVHLIFARVLEDGVDQGIGGFICVRDGENSPAGLVIGRRLYAMGVRGIPETHIEFHDLKVHKSMLVVPPGGLKRGFASLMTAYNAQRVGAGTVALGIAQGAFEEGLERLKTRHQFGRPIAEFQGLQWMAADMSTQLEAARLLLRHAAASGEEFPDIDKAARAKIFAAETANKVTNDALQFWGSSGYGRENPMERHVRDARMFTIAGGTAQILRTQVAGKLLGMKLPQTRDGFAKVAAR</sequence>
<dbReference type="EC" id="3.13.1.4" evidence="2"/>
<dbReference type="EMBL" id="EU449952">
    <property type="protein sequence ID" value="ACC69031.2"/>
    <property type="molecule type" value="Genomic_DNA"/>
</dbReference>
<dbReference type="EMBL" id="JZWI01000003">
    <property type="protein sequence ID" value="KLN58429.1"/>
    <property type="molecule type" value="Genomic_DNA"/>
</dbReference>
<dbReference type="RefSeq" id="WP_047783180.1">
    <property type="nucleotide sequence ID" value="NZ_JZWI01000003.1"/>
</dbReference>
<dbReference type="SMR" id="B9U6P5"/>
<dbReference type="PATRIC" id="fig|34073.19.peg.546"/>
<dbReference type="Proteomes" id="UP000035170">
    <property type="component" value="Unassembled WGS sequence"/>
</dbReference>
<dbReference type="GO" id="GO:0003995">
    <property type="term" value="F:acyl-CoA dehydrogenase activity"/>
    <property type="evidence" value="ECO:0007669"/>
    <property type="project" value="InterPro"/>
</dbReference>
<dbReference type="GO" id="GO:0050660">
    <property type="term" value="F:flavin adenine dinucleotide binding"/>
    <property type="evidence" value="ECO:0007669"/>
    <property type="project" value="InterPro"/>
</dbReference>
<dbReference type="GO" id="GO:0016787">
    <property type="term" value="F:hydrolase activity"/>
    <property type="evidence" value="ECO:0007669"/>
    <property type="project" value="UniProtKB-KW"/>
</dbReference>
<dbReference type="GO" id="GO:0046359">
    <property type="term" value="P:butyrate catabolic process"/>
    <property type="evidence" value="ECO:0007669"/>
    <property type="project" value="TreeGrafter"/>
</dbReference>
<dbReference type="GO" id="GO:0033539">
    <property type="term" value="P:fatty acid beta-oxidation using acyl-CoA dehydrogenase"/>
    <property type="evidence" value="ECO:0007669"/>
    <property type="project" value="TreeGrafter"/>
</dbReference>
<dbReference type="FunFam" id="1.20.140.10:FF:000004">
    <property type="entry name" value="Acyl-CoA dehydrogenase FadE25"/>
    <property type="match status" value="1"/>
</dbReference>
<dbReference type="Gene3D" id="1.10.540.10">
    <property type="entry name" value="Acyl-CoA dehydrogenase/oxidase, N-terminal domain"/>
    <property type="match status" value="1"/>
</dbReference>
<dbReference type="Gene3D" id="2.40.110.10">
    <property type="entry name" value="Butyryl-CoA Dehydrogenase, subunit A, domain 2"/>
    <property type="match status" value="1"/>
</dbReference>
<dbReference type="Gene3D" id="1.20.140.10">
    <property type="entry name" value="Butyryl-CoA Dehydrogenase, subunit A, domain 3"/>
    <property type="match status" value="1"/>
</dbReference>
<dbReference type="InterPro" id="IPR050032">
    <property type="entry name" value="AcdA"/>
</dbReference>
<dbReference type="InterPro" id="IPR006089">
    <property type="entry name" value="Acyl-CoA_DH_CS"/>
</dbReference>
<dbReference type="InterPro" id="IPR006091">
    <property type="entry name" value="Acyl-CoA_Oxase/DH_mid-dom"/>
</dbReference>
<dbReference type="InterPro" id="IPR046373">
    <property type="entry name" value="Acyl-CoA_Oxase/DH_mid-dom_sf"/>
</dbReference>
<dbReference type="InterPro" id="IPR036250">
    <property type="entry name" value="AcylCo_DH-like_C"/>
</dbReference>
<dbReference type="InterPro" id="IPR009075">
    <property type="entry name" value="AcylCo_DH/oxidase_C"/>
</dbReference>
<dbReference type="InterPro" id="IPR013786">
    <property type="entry name" value="AcylCoA_DH/ox_N"/>
</dbReference>
<dbReference type="InterPro" id="IPR037069">
    <property type="entry name" value="AcylCoA_DH/ox_N_sf"/>
</dbReference>
<dbReference type="InterPro" id="IPR009100">
    <property type="entry name" value="AcylCoA_DH/oxidase_NM_dom_sf"/>
</dbReference>
<dbReference type="NCBIfam" id="NF042439">
    <property type="entry name" value="SulpropCoADesulf"/>
    <property type="match status" value="1"/>
</dbReference>
<dbReference type="PANTHER" id="PTHR43884">
    <property type="entry name" value="ACYL-COA DEHYDROGENASE"/>
    <property type="match status" value="1"/>
</dbReference>
<dbReference type="PANTHER" id="PTHR43884:SF12">
    <property type="entry name" value="ISOVALERYL-COA DEHYDROGENASE, MITOCHONDRIAL-RELATED"/>
    <property type="match status" value="1"/>
</dbReference>
<dbReference type="Pfam" id="PF00441">
    <property type="entry name" value="Acyl-CoA_dh_1"/>
    <property type="match status" value="1"/>
</dbReference>
<dbReference type="Pfam" id="PF02770">
    <property type="entry name" value="Acyl-CoA_dh_M"/>
    <property type="match status" value="1"/>
</dbReference>
<dbReference type="Pfam" id="PF02771">
    <property type="entry name" value="Acyl-CoA_dh_N"/>
    <property type="match status" value="1"/>
</dbReference>
<dbReference type="PIRSF" id="PIRSF016578">
    <property type="entry name" value="HsaA"/>
    <property type="match status" value="1"/>
</dbReference>
<dbReference type="SUPFAM" id="SSF47203">
    <property type="entry name" value="Acyl-CoA dehydrogenase C-terminal domain-like"/>
    <property type="match status" value="1"/>
</dbReference>
<dbReference type="SUPFAM" id="SSF56645">
    <property type="entry name" value="Acyl-CoA dehydrogenase NM domain-like"/>
    <property type="match status" value="1"/>
</dbReference>
<dbReference type="PROSITE" id="PS00073">
    <property type="entry name" value="ACYL_COA_DH_2"/>
    <property type="match status" value="1"/>
</dbReference>
<organism>
    <name type="scientific">Variovorax paradoxus</name>
    <dbReference type="NCBI Taxonomy" id="34073"/>
    <lineage>
        <taxon>Bacteria</taxon>
        <taxon>Pseudomonadati</taxon>
        <taxon>Pseudomonadota</taxon>
        <taxon>Betaproteobacteria</taxon>
        <taxon>Burkholderiales</taxon>
        <taxon>Comamonadaceae</taxon>
        <taxon>Variovorax</taxon>
    </lineage>
</organism>
<proteinExistence type="evidence at protein level"/>